<name>DEOD_HAEIG</name>
<protein>
    <recommendedName>
        <fullName evidence="2">Purine nucleoside phosphorylase DeoD-type</fullName>
        <shortName evidence="2">PNP</shortName>
        <ecNumber evidence="2">2.4.2.1</ecNumber>
    </recommendedName>
</protein>
<keyword id="KW-0328">Glycosyltransferase</keyword>
<keyword id="KW-0808">Transferase</keyword>
<evidence type="ECO:0000250" key="1">
    <source>
        <dbReference type="UniProtKB" id="P50389"/>
    </source>
</evidence>
<evidence type="ECO:0000255" key="2">
    <source>
        <dbReference type="HAMAP-Rule" id="MF_01627"/>
    </source>
</evidence>
<dbReference type="EC" id="2.4.2.1" evidence="2"/>
<dbReference type="EMBL" id="CP000672">
    <property type="protein sequence ID" value="ABR00079.1"/>
    <property type="molecule type" value="Genomic_DNA"/>
</dbReference>
<dbReference type="SMR" id="A5UH23"/>
<dbReference type="KEGG" id="hiq:CGSHiGG_05840"/>
<dbReference type="HOGENOM" id="CLU_068457_2_0_6"/>
<dbReference type="Proteomes" id="UP000001990">
    <property type="component" value="Chromosome"/>
</dbReference>
<dbReference type="GO" id="GO:0005829">
    <property type="term" value="C:cytosol"/>
    <property type="evidence" value="ECO:0007669"/>
    <property type="project" value="TreeGrafter"/>
</dbReference>
<dbReference type="GO" id="GO:0004731">
    <property type="term" value="F:purine-nucleoside phosphorylase activity"/>
    <property type="evidence" value="ECO:0007669"/>
    <property type="project" value="UniProtKB-UniRule"/>
</dbReference>
<dbReference type="GO" id="GO:0006152">
    <property type="term" value="P:purine nucleoside catabolic process"/>
    <property type="evidence" value="ECO:0007669"/>
    <property type="project" value="TreeGrafter"/>
</dbReference>
<dbReference type="CDD" id="cd09006">
    <property type="entry name" value="PNP_EcPNPI-like"/>
    <property type="match status" value="1"/>
</dbReference>
<dbReference type="FunFam" id="3.40.50.1580:FF:000002">
    <property type="entry name" value="Purine nucleoside phosphorylase DeoD-type"/>
    <property type="match status" value="1"/>
</dbReference>
<dbReference type="Gene3D" id="3.40.50.1580">
    <property type="entry name" value="Nucleoside phosphorylase domain"/>
    <property type="match status" value="1"/>
</dbReference>
<dbReference type="HAMAP" id="MF_01627">
    <property type="entry name" value="Pur_nucleosid_phosp"/>
    <property type="match status" value="1"/>
</dbReference>
<dbReference type="InterPro" id="IPR004402">
    <property type="entry name" value="DeoD-type"/>
</dbReference>
<dbReference type="InterPro" id="IPR018016">
    <property type="entry name" value="Nucleoside_phosphorylase_CS"/>
</dbReference>
<dbReference type="InterPro" id="IPR000845">
    <property type="entry name" value="Nucleoside_phosphorylase_d"/>
</dbReference>
<dbReference type="InterPro" id="IPR035994">
    <property type="entry name" value="Nucleoside_phosphorylase_sf"/>
</dbReference>
<dbReference type="NCBIfam" id="TIGR00107">
    <property type="entry name" value="deoD"/>
    <property type="match status" value="1"/>
</dbReference>
<dbReference type="NCBIfam" id="NF004489">
    <property type="entry name" value="PRK05819.1"/>
    <property type="match status" value="1"/>
</dbReference>
<dbReference type="NCBIfam" id="NF009914">
    <property type="entry name" value="PRK13374.1"/>
    <property type="match status" value="1"/>
</dbReference>
<dbReference type="PANTHER" id="PTHR43691:SF2">
    <property type="entry name" value="PURINE NUCLEOSIDE PHOSPHORYLASE DEOD-TYPE"/>
    <property type="match status" value="1"/>
</dbReference>
<dbReference type="PANTHER" id="PTHR43691">
    <property type="entry name" value="URIDINE PHOSPHORYLASE"/>
    <property type="match status" value="1"/>
</dbReference>
<dbReference type="Pfam" id="PF01048">
    <property type="entry name" value="PNP_UDP_1"/>
    <property type="match status" value="1"/>
</dbReference>
<dbReference type="SUPFAM" id="SSF53167">
    <property type="entry name" value="Purine and uridine phosphorylases"/>
    <property type="match status" value="1"/>
</dbReference>
<dbReference type="PROSITE" id="PS01232">
    <property type="entry name" value="PNP_UDP_1"/>
    <property type="match status" value="1"/>
</dbReference>
<proteinExistence type="inferred from homology"/>
<comment type="function">
    <text evidence="2">Catalyzes the reversible phosphorolytic breakdown of the N-glycosidic bond in the beta-(deoxy)ribonucleoside molecules, with the formation of the corresponding free purine bases and pentose-1-phosphate.</text>
</comment>
<comment type="catalytic activity">
    <reaction evidence="2">
        <text>a purine D-ribonucleoside + phosphate = a purine nucleobase + alpha-D-ribose 1-phosphate</text>
        <dbReference type="Rhea" id="RHEA:19805"/>
        <dbReference type="ChEBI" id="CHEBI:26386"/>
        <dbReference type="ChEBI" id="CHEBI:43474"/>
        <dbReference type="ChEBI" id="CHEBI:57720"/>
        <dbReference type="ChEBI" id="CHEBI:142355"/>
        <dbReference type="EC" id="2.4.2.1"/>
    </reaction>
</comment>
<comment type="catalytic activity">
    <reaction evidence="2">
        <text>a purine 2'-deoxy-D-ribonucleoside + phosphate = a purine nucleobase + 2-deoxy-alpha-D-ribose 1-phosphate</text>
        <dbReference type="Rhea" id="RHEA:36431"/>
        <dbReference type="ChEBI" id="CHEBI:26386"/>
        <dbReference type="ChEBI" id="CHEBI:43474"/>
        <dbReference type="ChEBI" id="CHEBI:57259"/>
        <dbReference type="ChEBI" id="CHEBI:142361"/>
        <dbReference type="EC" id="2.4.2.1"/>
    </reaction>
</comment>
<comment type="subunit">
    <text evidence="2">Homohexamer; trimer of homodimers.</text>
</comment>
<comment type="similarity">
    <text evidence="2">Belongs to the PNP/UDP phosphorylase family.</text>
</comment>
<sequence length="238" mass="25872">MTPHINAPEGAFADVVLMPGDPLRAKYIAETFLQDVVEVTNVRNMLGFTGTYKGRKISIMGHGMGIPSCSIYAKELITEYGVKKIIRVGSCGTVRMDVKVRDVIIGLGACTDSKVNRIRFKDNDFAAIADFDMAQAAVQAAKAKGKAVRVGNLFSADLFYTPDVEMFDVMEKYGILGVEMEAAGIYGVAAEYGAKALTICTVSDHIRTHEQTTAEERQLTFNDMIEIALDSVLIGDAQ</sequence>
<organism>
    <name type="scientific">Haemophilus influenzae (strain PittGG)</name>
    <dbReference type="NCBI Taxonomy" id="374931"/>
    <lineage>
        <taxon>Bacteria</taxon>
        <taxon>Pseudomonadati</taxon>
        <taxon>Pseudomonadota</taxon>
        <taxon>Gammaproteobacteria</taxon>
        <taxon>Pasteurellales</taxon>
        <taxon>Pasteurellaceae</taxon>
        <taxon>Haemophilus</taxon>
    </lineage>
</organism>
<gene>
    <name evidence="2" type="primary">deoD</name>
    <name type="ordered locus">CGSHiGG_05840</name>
</gene>
<feature type="chain" id="PRO_1000069632" description="Purine nucleoside phosphorylase DeoD-type">
    <location>
        <begin position="1"/>
        <end position="238"/>
    </location>
</feature>
<feature type="active site" description="Proton donor" evidence="2">
    <location>
        <position position="204"/>
    </location>
</feature>
<feature type="binding site" evidence="1">
    <location>
        <position position="4"/>
    </location>
    <ligand>
        <name>a purine D-ribonucleoside</name>
        <dbReference type="ChEBI" id="CHEBI:142355"/>
        <note>ligand shared between dimeric partners</note>
    </ligand>
</feature>
<feature type="binding site" description="in other chain" evidence="1">
    <location>
        <position position="20"/>
    </location>
    <ligand>
        <name>phosphate</name>
        <dbReference type="ChEBI" id="CHEBI:43474"/>
        <note>ligand shared between dimeric partners</note>
    </ligand>
</feature>
<feature type="binding site" description="in other chain" evidence="1">
    <location>
        <position position="24"/>
    </location>
    <ligand>
        <name>phosphate</name>
        <dbReference type="ChEBI" id="CHEBI:43474"/>
        <note>ligand shared between dimeric partners</note>
    </ligand>
</feature>
<feature type="binding site" evidence="1">
    <location>
        <position position="43"/>
    </location>
    <ligand>
        <name>phosphate</name>
        <dbReference type="ChEBI" id="CHEBI:43474"/>
        <note>ligand shared between dimeric partners</note>
    </ligand>
</feature>
<feature type="binding site" description="in other chain" evidence="1">
    <location>
        <begin position="87"/>
        <end position="90"/>
    </location>
    <ligand>
        <name>phosphate</name>
        <dbReference type="ChEBI" id="CHEBI:43474"/>
        <note>ligand shared between dimeric partners</note>
    </ligand>
</feature>
<feature type="binding site" description="in other chain" evidence="1">
    <location>
        <begin position="179"/>
        <end position="181"/>
    </location>
    <ligand>
        <name>a purine D-ribonucleoside</name>
        <dbReference type="ChEBI" id="CHEBI:142355"/>
        <note>ligand shared between dimeric partners</note>
    </ligand>
</feature>
<feature type="binding site" description="in other chain" evidence="1">
    <location>
        <begin position="203"/>
        <end position="204"/>
    </location>
    <ligand>
        <name>a purine D-ribonucleoside</name>
        <dbReference type="ChEBI" id="CHEBI:142355"/>
        <note>ligand shared between dimeric partners</note>
    </ligand>
</feature>
<feature type="site" description="Important for catalytic activity" evidence="2">
    <location>
        <position position="217"/>
    </location>
</feature>
<reference key="1">
    <citation type="journal article" date="2007" name="Genome Biol.">
        <title>Characterization and modeling of the Haemophilus influenzae core and supragenomes based on the complete genomic sequences of Rd and 12 clinical nontypeable strains.</title>
        <authorList>
            <person name="Hogg J.S."/>
            <person name="Hu F.Z."/>
            <person name="Janto B."/>
            <person name="Boissy R."/>
            <person name="Hayes J."/>
            <person name="Keefe R."/>
            <person name="Post J.C."/>
            <person name="Ehrlich G.D."/>
        </authorList>
    </citation>
    <scope>NUCLEOTIDE SEQUENCE [LARGE SCALE GENOMIC DNA]</scope>
    <source>
        <strain>PittGG</strain>
    </source>
</reference>
<accession>A5UH23</accession>